<feature type="chain" id="PRO_0000185371" description="Alpha-xylosidase">
    <location>
        <begin position="1"/>
        <end position="772"/>
    </location>
</feature>
<feature type="active site" description="Nucleophile" evidence="2">
    <location>
        <position position="416"/>
    </location>
</feature>
<feature type="active site" evidence="2">
    <location>
        <position position="419"/>
    </location>
</feature>
<feature type="active site" description="Proton donor" evidence="2">
    <location>
        <position position="482"/>
    </location>
</feature>
<feature type="mutagenesis site" description="Converts the enzyme to have alpha-glucosidase activity." evidence="3">
    <original>CF</original>
    <variation>ID</variation>
    <location>
        <begin position="307"/>
        <end position="308"/>
    </location>
</feature>
<feature type="turn" evidence="8">
    <location>
        <begin position="6"/>
        <end position="8"/>
    </location>
</feature>
<feature type="strand" evidence="8">
    <location>
        <begin position="14"/>
        <end position="17"/>
    </location>
</feature>
<feature type="strand" evidence="8">
    <location>
        <begin position="21"/>
        <end position="28"/>
    </location>
</feature>
<feature type="strand" evidence="8">
    <location>
        <begin position="31"/>
        <end position="39"/>
    </location>
</feature>
<feature type="helix" evidence="8">
    <location>
        <begin position="44"/>
        <end position="46"/>
    </location>
</feature>
<feature type="strand" evidence="8">
    <location>
        <begin position="47"/>
        <end position="50"/>
    </location>
</feature>
<feature type="strand" evidence="8">
    <location>
        <begin position="53"/>
        <end position="58"/>
    </location>
</feature>
<feature type="strand" evidence="8">
    <location>
        <begin position="64"/>
        <end position="71"/>
    </location>
</feature>
<feature type="strand" evidence="8">
    <location>
        <begin position="92"/>
        <end position="96"/>
    </location>
</feature>
<feature type="strand" evidence="8">
    <location>
        <begin position="98"/>
        <end position="105"/>
    </location>
</feature>
<feature type="strand" evidence="8">
    <location>
        <begin position="108"/>
        <end position="113"/>
    </location>
</feature>
<feature type="strand" evidence="8">
    <location>
        <begin position="115"/>
        <end position="117"/>
    </location>
</feature>
<feature type="strand" evidence="8">
    <location>
        <begin position="119"/>
        <end position="124"/>
    </location>
</feature>
<feature type="strand" evidence="8">
    <location>
        <begin position="127"/>
        <end position="133"/>
    </location>
</feature>
<feature type="strand" evidence="8">
    <location>
        <begin position="136"/>
        <end position="142"/>
    </location>
</feature>
<feature type="turn" evidence="8">
    <location>
        <begin position="143"/>
        <end position="146"/>
    </location>
</feature>
<feature type="strand" evidence="8">
    <location>
        <begin position="147"/>
        <end position="155"/>
    </location>
</feature>
<feature type="strand" evidence="8">
    <location>
        <begin position="162"/>
        <end position="167"/>
    </location>
</feature>
<feature type="strand" evidence="8">
    <location>
        <begin position="177"/>
        <end position="180"/>
    </location>
</feature>
<feature type="strand" evidence="8">
    <location>
        <begin position="189"/>
        <end position="191"/>
    </location>
</feature>
<feature type="strand" evidence="8">
    <location>
        <begin position="194"/>
        <end position="202"/>
    </location>
</feature>
<feature type="strand" evidence="8">
    <location>
        <begin position="205"/>
        <end position="210"/>
    </location>
</feature>
<feature type="strand" evidence="8">
    <location>
        <begin position="217"/>
        <end position="224"/>
    </location>
</feature>
<feature type="strand" evidence="8">
    <location>
        <begin position="227"/>
        <end position="243"/>
    </location>
</feature>
<feature type="helix" evidence="8">
    <location>
        <begin position="247"/>
        <end position="258"/>
    </location>
</feature>
<feature type="helix" evidence="8">
    <location>
        <begin position="266"/>
        <end position="269"/>
    </location>
</feature>
<feature type="strand" evidence="8">
    <location>
        <begin position="270"/>
        <end position="274"/>
    </location>
</feature>
<feature type="strand" evidence="8">
    <location>
        <begin position="277"/>
        <end position="279"/>
    </location>
</feature>
<feature type="helix" evidence="8">
    <location>
        <begin position="283"/>
        <end position="295"/>
    </location>
</feature>
<feature type="strand" evidence="8">
    <location>
        <begin position="302"/>
        <end position="305"/>
    </location>
</feature>
<feature type="helix" evidence="8">
    <location>
        <begin position="307"/>
        <end position="309"/>
    </location>
</feature>
<feature type="turn" evidence="8">
    <location>
        <begin position="322"/>
        <end position="324"/>
    </location>
</feature>
<feature type="helix" evidence="8">
    <location>
        <begin position="328"/>
        <end position="337"/>
    </location>
</feature>
<feature type="strand" evidence="8">
    <location>
        <begin position="341"/>
        <end position="346"/>
    </location>
</feature>
<feature type="strand" evidence="8">
    <location>
        <begin position="348"/>
        <end position="350"/>
    </location>
</feature>
<feature type="helix" evidence="8">
    <location>
        <begin position="357"/>
        <end position="363"/>
    </location>
</feature>
<feature type="strand" evidence="8">
    <location>
        <begin position="372"/>
        <end position="374"/>
    </location>
</feature>
<feature type="strand" evidence="8">
    <location>
        <begin position="377"/>
        <end position="381"/>
    </location>
</feature>
<feature type="strand" evidence="8">
    <location>
        <begin position="384"/>
        <end position="387"/>
    </location>
</feature>
<feature type="helix" evidence="8">
    <location>
        <begin position="392"/>
        <end position="407"/>
    </location>
</feature>
<feature type="strand" evidence="8">
    <location>
        <begin position="412"/>
        <end position="415"/>
    </location>
</feature>
<feature type="strand" evidence="8">
    <location>
        <begin position="423"/>
        <end position="426"/>
    </location>
</feature>
<feature type="helix" evidence="8">
    <location>
        <begin position="433"/>
        <end position="453"/>
    </location>
</feature>
<feature type="turn" evidence="8">
    <location>
        <begin position="454"/>
        <end position="456"/>
    </location>
</feature>
<feature type="helix" evidence="8">
    <location>
        <begin position="458"/>
        <end position="460"/>
    </location>
</feature>
<feature type="strand" evidence="8">
    <location>
        <begin position="463"/>
        <end position="466"/>
    </location>
</feature>
<feature type="helix" evidence="8">
    <location>
        <begin position="472"/>
        <end position="474"/>
    </location>
</feature>
<feature type="strand" evidence="6">
    <location>
        <begin position="484"/>
        <end position="486"/>
    </location>
</feature>
<feature type="helix" evidence="8">
    <location>
        <begin position="487"/>
        <end position="501"/>
    </location>
</feature>
<feature type="turn" evidence="8">
    <location>
        <begin position="502"/>
        <end position="504"/>
    </location>
</feature>
<feature type="strand" evidence="8">
    <location>
        <begin position="508"/>
        <end position="511"/>
    </location>
</feature>
<feature type="strand" evidence="8">
    <location>
        <begin position="515"/>
        <end position="517"/>
    </location>
</feature>
<feature type="helix" evidence="8">
    <location>
        <begin position="521"/>
        <end position="532"/>
    </location>
</feature>
<feature type="strand" evidence="8">
    <location>
        <begin position="534"/>
        <end position="539"/>
    </location>
</feature>
<feature type="strand" evidence="8">
    <location>
        <begin position="542"/>
        <end position="544"/>
    </location>
</feature>
<feature type="helix" evidence="8">
    <location>
        <begin position="548"/>
        <end position="550"/>
    </location>
</feature>
<feature type="helix" evidence="8">
    <location>
        <begin position="553"/>
        <end position="583"/>
    </location>
</feature>
<feature type="strand" evidence="8">
    <location>
        <begin position="587"/>
        <end position="589"/>
    </location>
</feature>
<feature type="helix" evidence="8">
    <location>
        <begin position="591"/>
        <end position="594"/>
    </location>
</feature>
<feature type="helix" evidence="8">
    <location>
        <begin position="599"/>
        <end position="601"/>
    </location>
</feature>
<feature type="strand" evidence="8">
    <location>
        <begin position="608"/>
        <end position="610"/>
    </location>
</feature>
<feature type="turn" evidence="8">
    <location>
        <begin position="611"/>
        <end position="613"/>
    </location>
</feature>
<feature type="strand" evidence="8">
    <location>
        <begin position="614"/>
        <end position="616"/>
    </location>
</feature>
<feature type="strand" evidence="8">
    <location>
        <begin position="621"/>
        <end position="623"/>
    </location>
</feature>
<feature type="strand" evidence="8">
    <location>
        <begin position="625"/>
        <end position="630"/>
    </location>
</feature>
<feature type="strand" evidence="8">
    <location>
        <begin position="632"/>
        <end position="637"/>
    </location>
</feature>
<feature type="turn" evidence="8">
    <location>
        <begin position="638"/>
        <end position="640"/>
    </location>
</feature>
<feature type="strand" evidence="8">
    <location>
        <begin position="643"/>
        <end position="645"/>
    </location>
</feature>
<feature type="strand" evidence="8">
    <location>
        <begin position="647"/>
        <end position="653"/>
    </location>
</feature>
<feature type="strand" evidence="8">
    <location>
        <begin position="661"/>
        <end position="663"/>
    </location>
</feature>
<feature type="strand" evidence="8">
    <location>
        <begin position="665"/>
        <end position="671"/>
    </location>
</feature>
<feature type="strand" evidence="6">
    <location>
        <begin position="678"/>
        <end position="680"/>
    </location>
</feature>
<feature type="strand" evidence="8">
    <location>
        <begin position="687"/>
        <end position="691"/>
    </location>
</feature>
<feature type="strand" evidence="8">
    <location>
        <begin position="698"/>
        <end position="704"/>
    </location>
</feature>
<feature type="strand" evidence="8">
    <location>
        <begin position="710"/>
        <end position="719"/>
    </location>
</feature>
<feature type="strand" evidence="8">
    <location>
        <begin position="722"/>
        <end position="729"/>
    </location>
</feature>
<feature type="strand" evidence="8">
    <location>
        <begin position="735"/>
        <end position="738"/>
    </location>
</feature>
<feature type="strand" evidence="8">
    <location>
        <begin position="745"/>
        <end position="753"/>
    </location>
</feature>
<feature type="strand" evidence="7">
    <location>
        <begin position="756"/>
        <end position="758"/>
    </location>
</feature>
<feature type="strand" evidence="8">
    <location>
        <begin position="760"/>
        <end position="766"/>
    </location>
</feature>
<feature type="strand" evidence="5">
    <location>
        <begin position="770"/>
        <end position="772"/>
    </location>
</feature>
<name>XYLS_ECOLI</name>
<sequence>MKISDGNWLIQPGLNLIHPLQVFEVEQQDNEMVVYAAPRDVRERTWQLDTPLFTLRFFSPQEGIVGVRIEHFQGALNNGPHYPLNILQDVKVTIENTERYAEFKSGNLSARVSKGEFWSLDFLRNGERITGSQVKNNGYVQDTNNQRNYMFERLDLGVGETVYGLGERFTALVRNGQTVETWNRDGGTSTEQAYKNIPFYMTNRGYGVLVNHPQCVSFEVGSEKVSKVQFSVESEYLEYFVIDGPTPKAVLDRYTRFTGRPALPPAWSFGLWLTTSFTTNYDEATVNSFIDGMAERNLPLHVFHFDCFWMKAFQWCDFEWDPLTFPDPEGMIRRLKAKGLKICVWINPYIGQKSPVFKELQEKGYLLKRPDGSLWQWDKWQPGLAIYDFTNPDACKWYADKLKGLVAMGVDCFKTDFGERIPTDVQWFDGSDPQKMHNHYAYIYNELVWNVLKDTVGEEEAVLFARSASVGAQKFPVHWGGDCYANYESMAESLRGGLSIGLSGFGFWSHDIGGFENTAPAHVYKRWCAFGLLSSHSRLHGSKSYRVPWAYDDESCDVVRFFTQLKCRMMPYLYREAARANARGTPMMRAMMMEFPDDPACDYLDRQYMLGDNVMVAPVFTEAGDVQFYLPEGRWTHLWHNDELDGSRWHKQQHGFLSLPVYVRDNTLLALGNNDQRPDYVWHEGTAFHLFNLQDGHEAVCEVPAADGSVIFTLKAARTGNTITVTGAGEAKNWTLCLRNVVKVNGLQDGSQAESEQGLVVKPQGNALTITL</sequence>
<protein>
    <recommendedName>
        <fullName>Alpha-xylosidase</fullName>
        <ecNumber>3.2.1.177</ecNumber>
    </recommendedName>
</protein>
<gene>
    <name type="primary">yicI</name>
    <name type="ordered locus">b3656</name>
    <name type="ordered locus">JW3631</name>
</gene>
<organism>
    <name type="scientific">Escherichia coli (strain K12)</name>
    <dbReference type="NCBI Taxonomy" id="83333"/>
    <lineage>
        <taxon>Bacteria</taxon>
        <taxon>Pseudomonadati</taxon>
        <taxon>Pseudomonadota</taxon>
        <taxon>Gammaproteobacteria</taxon>
        <taxon>Enterobacterales</taxon>
        <taxon>Enterobacteriaceae</taxon>
        <taxon>Escherichia</taxon>
    </lineage>
</organism>
<proteinExistence type="evidence at protein level"/>
<dbReference type="EC" id="3.2.1.177"/>
<dbReference type="EMBL" id="L10328">
    <property type="protein sequence ID" value="AAA62009.1"/>
    <property type="molecule type" value="Genomic_DNA"/>
</dbReference>
<dbReference type="EMBL" id="U00096">
    <property type="protein sequence ID" value="AAC76680.1"/>
    <property type="molecule type" value="Genomic_DNA"/>
</dbReference>
<dbReference type="EMBL" id="AP009048">
    <property type="protein sequence ID" value="BAE77637.1"/>
    <property type="molecule type" value="Genomic_DNA"/>
</dbReference>
<dbReference type="PIR" id="B65167">
    <property type="entry name" value="B65167"/>
</dbReference>
<dbReference type="RefSeq" id="NP_418113.1">
    <property type="nucleotide sequence ID" value="NC_000913.3"/>
</dbReference>
<dbReference type="RefSeq" id="WP_000702898.1">
    <property type="nucleotide sequence ID" value="NZ_LN832404.1"/>
</dbReference>
<dbReference type="PDB" id="1WE5">
    <property type="method" value="X-ray"/>
    <property type="resolution" value="2.40 A"/>
    <property type="chains" value="A/B/C/D/E/F=1-772"/>
</dbReference>
<dbReference type="PDB" id="1XSI">
    <property type="method" value="X-ray"/>
    <property type="resolution" value="2.20 A"/>
    <property type="chains" value="A/B/C/D/E/F=1-772"/>
</dbReference>
<dbReference type="PDB" id="1XSJ">
    <property type="method" value="X-ray"/>
    <property type="resolution" value="2.10 A"/>
    <property type="chains" value="A/B/C/D/E/F=1-772"/>
</dbReference>
<dbReference type="PDB" id="1XSK">
    <property type="method" value="X-ray"/>
    <property type="resolution" value="2.20 A"/>
    <property type="chains" value="A/B/C/D/E/F=1-772"/>
</dbReference>
<dbReference type="PDB" id="2F2H">
    <property type="method" value="X-ray"/>
    <property type="resolution" value="1.95 A"/>
    <property type="chains" value="A/B/C/D/E/F=1-772"/>
</dbReference>
<dbReference type="PDBsum" id="1WE5"/>
<dbReference type="PDBsum" id="1XSI"/>
<dbReference type="PDBsum" id="1XSJ"/>
<dbReference type="PDBsum" id="1XSK"/>
<dbReference type="PDBsum" id="2F2H"/>
<dbReference type="SMR" id="P31434"/>
<dbReference type="BioGRID" id="4262572">
    <property type="interactions" value="8"/>
</dbReference>
<dbReference type="DIP" id="DIP-12433N"/>
<dbReference type="FunCoup" id="P31434">
    <property type="interactions" value="647"/>
</dbReference>
<dbReference type="IntAct" id="P31434">
    <property type="interactions" value="2"/>
</dbReference>
<dbReference type="STRING" id="511145.b3656"/>
<dbReference type="DrugBank" id="DB03586">
    <property type="generic name" value="(3R,4R,5S,6R)-6-Fluoro-3,4,5-trihydroxytetrahydro-2H-pyran-2-olate"/>
</dbReference>
<dbReference type="DrugBank" id="DB03814">
    <property type="generic name" value="2-(N-morpholino)ethanesulfonic acid"/>
</dbReference>
<dbReference type="DrugBank" id="DB03434">
    <property type="generic name" value="3-(N-morpholino)propanesulfonic acid"/>
</dbReference>
<dbReference type="DrugBank" id="DB04807">
    <property type="generic name" value="4-NITROPHENYL-(6-S-ALPHA-D-XYLOPYRANOSYL)-BETA-D-GLUCOPYRANOSIDE"/>
</dbReference>
<dbReference type="CAZy" id="GH31">
    <property type="family name" value="Glycoside Hydrolase Family 31"/>
</dbReference>
<dbReference type="PaxDb" id="511145-b3656"/>
<dbReference type="EnsemblBacteria" id="AAC76680">
    <property type="protein sequence ID" value="AAC76680"/>
    <property type="gene ID" value="b3656"/>
</dbReference>
<dbReference type="GeneID" id="948169"/>
<dbReference type="KEGG" id="ecj:JW3631"/>
<dbReference type="KEGG" id="eco:b3656"/>
<dbReference type="KEGG" id="ecoc:C3026_19805"/>
<dbReference type="PATRIC" id="fig|1411691.4.peg.3050"/>
<dbReference type="EchoBASE" id="EB1636"/>
<dbReference type="eggNOG" id="COG1501">
    <property type="taxonomic scope" value="Bacteria"/>
</dbReference>
<dbReference type="HOGENOM" id="CLU_000631_10_0_6"/>
<dbReference type="InParanoid" id="P31434"/>
<dbReference type="OMA" id="QGVDCFK"/>
<dbReference type="OrthoDB" id="176168at2"/>
<dbReference type="PhylomeDB" id="P31434"/>
<dbReference type="BioCyc" id="EcoCyc:EG11685-MONOMER"/>
<dbReference type="BioCyc" id="MetaCyc:EG11685-MONOMER"/>
<dbReference type="BRENDA" id="3.2.1.177">
    <property type="organism ID" value="2026"/>
</dbReference>
<dbReference type="SABIO-RK" id="P31434"/>
<dbReference type="EvolutionaryTrace" id="P31434"/>
<dbReference type="PRO" id="PR:P31434"/>
<dbReference type="Proteomes" id="UP000000625">
    <property type="component" value="Chromosome"/>
</dbReference>
<dbReference type="GO" id="GO:0061634">
    <property type="term" value="F:alpha-D-xyloside xylohydrolase"/>
    <property type="evidence" value="ECO:0007669"/>
    <property type="project" value="UniProtKB-EC"/>
</dbReference>
<dbReference type="GO" id="GO:0030246">
    <property type="term" value="F:carbohydrate binding"/>
    <property type="evidence" value="ECO:0007669"/>
    <property type="project" value="InterPro"/>
</dbReference>
<dbReference type="GO" id="GO:0042802">
    <property type="term" value="F:identical protein binding"/>
    <property type="evidence" value="ECO:0000314"/>
    <property type="project" value="EcoCyc"/>
</dbReference>
<dbReference type="GO" id="GO:0080176">
    <property type="term" value="F:xyloglucan 1,6-alpha-xylosidase activity"/>
    <property type="evidence" value="ECO:0000314"/>
    <property type="project" value="EcoCyc"/>
</dbReference>
<dbReference type="GO" id="GO:0005975">
    <property type="term" value="P:carbohydrate metabolic process"/>
    <property type="evidence" value="ECO:0007669"/>
    <property type="project" value="InterPro"/>
</dbReference>
<dbReference type="CDD" id="cd14752">
    <property type="entry name" value="GH31_N"/>
    <property type="match status" value="1"/>
</dbReference>
<dbReference type="CDD" id="cd06593">
    <property type="entry name" value="GH31_xylosidase_YicI"/>
    <property type="match status" value="1"/>
</dbReference>
<dbReference type="FunFam" id="2.60.40.1180:FF:000034">
    <property type="entry name" value="Alpha-xylosidase"/>
    <property type="match status" value="1"/>
</dbReference>
<dbReference type="FunFam" id="3.20.20.80:FF:000053">
    <property type="entry name" value="Alpha-xylosidase YicI"/>
    <property type="match status" value="1"/>
</dbReference>
<dbReference type="Gene3D" id="3.20.20.80">
    <property type="entry name" value="Glycosidases"/>
    <property type="match status" value="1"/>
</dbReference>
<dbReference type="Gene3D" id="2.60.40.1760">
    <property type="entry name" value="glycosyl hydrolase (family 31)"/>
    <property type="match status" value="1"/>
</dbReference>
<dbReference type="Gene3D" id="2.60.40.1180">
    <property type="entry name" value="Golgi alpha-mannosidase II"/>
    <property type="match status" value="2"/>
</dbReference>
<dbReference type="InterPro" id="IPR050985">
    <property type="entry name" value="Alpha-glycosidase_related"/>
</dbReference>
<dbReference type="InterPro" id="IPR011013">
    <property type="entry name" value="Gal_mutarotase_sf_dom"/>
</dbReference>
<dbReference type="InterPro" id="IPR048395">
    <property type="entry name" value="Glyco_hydro_31_C"/>
</dbReference>
<dbReference type="InterPro" id="IPR025887">
    <property type="entry name" value="Glyco_hydro_31_N_dom"/>
</dbReference>
<dbReference type="InterPro" id="IPR000322">
    <property type="entry name" value="Glyco_hydro_31_TIM"/>
</dbReference>
<dbReference type="InterPro" id="IPR013780">
    <property type="entry name" value="Glyco_hydro_b"/>
</dbReference>
<dbReference type="InterPro" id="IPR017853">
    <property type="entry name" value="Glycoside_hydrolase_SF"/>
</dbReference>
<dbReference type="NCBIfam" id="NF007940">
    <property type="entry name" value="PRK10658.1"/>
    <property type="match status" value="1"/>
</dbReference>
<dbReference type="PANTHER" id="PTHR43053">
    <property type="entry name" value="GLYCOSIDASE FAMILY 31"/>
    <property type="match status" value="1"/>
</dbReference>
<dbReference type="PANTHER" id="PTHR43053:SF4">
    <property type="entry name" value="MYOGENESIS-REGULATING GLYCOSIDASE"/>
    <property type="match status" value="1"/>
</dbReference>
<dbReference type="Pfam" id="PF13802">
    <property type="entry name" value="Gal_mutarotas_2"/>
    <property type="match status" value="1"/>
</dbReference>
<dbReference type="Pfam" id="PF01055">
    <property type="entry name" value="Glyco_hydro_31_2nd"/>
    <property type="match status" value="1"/>
</dbReference>
<dbReference type="Pfam" id="PF21365">
    <property type="entry name" value="Glyco_hydro_31_3rd"/>
    <property type="match status" value="1"/>
</dbReference>
<dbReference type="SUPFAM" id="SSF51445">
    <property type="entry name" value="(Trans)glycosidases"/>
    <property type="match status" value="1"/>
</dbReference>
<dbReference type="SUPFAM" id="SSF74650">
    <property type="entry name" value="Galactose mutarotase-like"/>
    <property type="match status" value="1"/>
</dbReference>
<dbReference type="SUPFAM" id="SSF51011">
    <property type="entry name" value="Glycosyl hydrolase domain"/>
    <property type="match status" value="1"/>
</dbReference>
<dbReference type="SUPFAM" id="SSF117125">
    <property type="entry name" value="Putative glucosidase YicI, C-terminal domain"/>
    <property type="match status" value="1"/>
</dbReference>
<accession>P31434</accession>
<accession>P76723</accession>
<accession>Q2M7W9</accession>
<evidence type="ECO:0000269" key="1">
    <source>
    </source>
</evidence>
<evidence type="ECO:0000269" key="2">
    <source>
    </source>
</evidence>
<evidence type="ECO:0000269" key="3">
    <source>
    </source>
</evidence>
<evidence type="ECO:0000305" key="4"/>
<evidence type="ECO:0007829" key="5">
    <source>
        <dbReference type="PDB" id="1XSI"/>
    </source>
</evidence>
<evidence type="ECO:0007829" key="6">
    <source>
        <dbReference type="PDB" id="1XSJ"/>
    </source>
</evidence>
<evidence type="ECO:0007829" key="7">
    <source>
        <dbReference type="PDB" id="1XSK"/>
    </source>
</evidence>
<evidence type="ECO:0007829" key="8">
    <source>
        <dbReference type="PDB" id="2F2H"/>
    </source>
</evidence>
<reference key="1">
    <citation type="journal article" date="1993" name="Genomics">
        <title>DNA sequence and analysis of 136 kilobases of the Escherichia coli genome: organizational symmetry around the origin of replication.</title>
        <authorList>
            <person name="Burland V.D."/>
            <person name="Plunkett G. III"/>
            <person name="Daniels D.L."/>
            <person name="Blattner F.R."/>
        </authorList>
    </citation>
    <scope>NUCLEOTIDE SEQUENCE [LARGE SCALE GENOMIC DNA]</scope>
    <source>
        <strain>K12 / MG1655 / ATCC 47076</strain>
    </source>
</reference>
<reference key="2">
    <citation type="journal article" date="1997" name="Science">
        <title>The complete genome sequence of Escherichia coli K-12.</title>
        <authorList>
            <person name="Blattner F.R."/>
            <person name="Plunkett G. III"/>
            <person name="Bloch C.A."/>
            <person name="Perna N.T."/>
            <person name="Burland V."/>
            <person name="Riley M."/>
            <person name="Collado-Vides J."/>
            <person name="Glasner J.D."/>
            <person name="Rode C.K."/>
            <person name="Mayhew G.F."/>
            <person name="Gregor J."/>
            <person name="Davis N.W."/>
            <person name="Kirkpatrick H.A."/>
            <person name="Goeden M.A."/>
            <person name="Rose D.J."/>
            <person name="Mau B."/>
            <person name="Shao Y."/>
        </authorList>
    </citation>
    <scope>NUCLEOTIDE SEQUENCE [LARGE SCALE GENOMIC DNA]</scope>
    <source>
        <strain>K12 / MG1655 / ATCC 47076</strain>
    </source>
</reference>
<reference key="3">
    <citation type="journal article" date="2006" name="Mol. Syst. Biol.">
        <title>Highly accurate genome sequences of Escherichia coli K-12 strains MG1655 and W3110.</title>
        <authorList>
            <person name="Hayashi K."/>
            <person name="Morooka N."/>
            <person name="Yamamoto Y."/>
            <person name="Fujita K."/>
            <person name="Isono K."/>
            <person name="Choi S."/>
            <person name="Ohtsubo E."/>
            <person name="Baba T."/>
            <person name="Wanner B.L."/>
            <person name="Mori H."/>
            <person name="Horiuchi T."/>
        </authorList>
    </citation>
    <scope>NUCLEOTIDE SEQUENCE [LARGE SCALE GENOMIC DNA]</scope>
    <source>
        <strain>K12 / W3110 / ATCC 27325 / DSM 5911</strain>
    </source>
</reference>
<reference key="4">
    <citation type="journal article" date="2004" name="Protein Expr. Purif.">
        <title>Overexpression and characterization of two unknown proteins, YicI and YihQ, originated from Escherichia coli.</title>
        <authorList>
            <person name="Okuyama M."/>
            <person name="Mori H."/>
            <person name="Chiba S."/>
            <person name="Kimura A."/>
        </authorList>
    </citation>
    <scope>FUNCTION</scope>
    <scope>SUBUNIT</scope>
    <scope>BIOPHYSICOCHEMICAL PROPERTIES</scope>
</reference>
<reference key="5">
    <citation type="journal article" date="2006" name="FEBS Lett.">
        <title>Structural elements to convert Escherichia coli alpha-xylosidase (YicI) into alpha-glucosidase.</title>
        <authorList>
            <person name="Okuyama M."/>
            <person name="Kaneko A."/>
            <person name="Mori H."/>
            <person name="Chiba S."/>
            <person name="Kimura A."/>
        </authorList>
    </citation>
    <scope>CATALYTIC ACTIVITY</scope>
    <scope>MUTAGENESIS OF 307-CYS-PHE-308</scope>
</reference>
<reference key="6">
    <citation type="journal article" date="2005" name="J. Biol. Chem.">
        <title>Mechanistic and structural analysis of a family 31 alpha-glycosidase and its glycosyl-enzyme intermediate.</title>
        <authorList>
            <person name="Lovering A.L."/>
            <person name="Lee S.S."/>
            <person name="Kim Y.-W."/>
            <person name="Withers S.G."/>
            <person name="Strynadka N.C.J."/>
        </authorList>
    </citation>
    <scope>X-RAY CRYSTALLOGRAPHY (2.2 ANGSTROMS)</scope>
    <scope>FUNCTION</scope>
    <scope>SUBUNIT</scope>
    <scope>ACTIVE SITES</scope>
</reference>
<reference key="7">
    <citation type="submission" date="2004-05" db="PDB data bank">
        <title>Crystal structure of alpha-xylosidase from Escherichia coli.</title>
        <authorList>
            <person name="Ose T."/>
            <person name="Kitamura M."/>
            <person name="Okuyama M."/>
            <person name="Mori H."/>
            <person name="Kimura A."/>
            <person name="Watanabe N."/>
            <person name="Yao M."/>
            <person name="Tanaka I."/>
        </authorList>
    </citation>
    <scope>X-RAY CRYSTALLOGRAPHY (2.4 ANGSTROMS)</scope>
</reference>
<comment type="function">
    <text evidence="1 2">Can catalyze the transfer of alpha-xylosyl residue from alpha-xyloside to xylose, glucose, mannose, fructose, maltose, isomaltose, nigerose, kojibiose, sucrose and trehalose.</text>
</comment>
<comment type="catalytic activity">
    <reaction evidence="3">
        <text>Hydrolysis of terminal, non-reducing alpha-D-xylose residues with release of alpha-D-xylose.</text>
        <dbReference type="EC" id="3.2.1.177"/>
    </reaction>
</comment>
<comment type="biophysicochemical properties">
    <phDependence>
        <text evidence="1">Optimum pH is 7.0.</text>
    </phDependence>
</comment>
<comment type="subunit">
    <text evidence="1 2">Homohexamer.</text>
</comment>
<comment type="similarity">
    <text evidence="4">Belongs to the glycosyl hydrolase 31 family.</text>
</comment>
<keyword id="KW-0002">3D-structure</keyword>
<keyword id="KW-0326">Glycosidase</keyword>
<keyword id="KW-0378">Hydrolase</keyword>
<keyword id="KW-1185">Reference proteome</keyword>